<proteinExistence type="inferred from homology"/>
<gene>
    <name evidence="1" type="primary">xni</name>
    <name evidence="1" type="synonym">ygdG</name>
    <name type="ordered locus">Shal_3066</name>
</gene>
<sequence>MNKFLIIDGMNLVRRIHAAQPNESDITGLKERVNGACRKLLKFHQPSHAAIVWDGDAISWRKALFEDYKKGRKPMPEALANGLVELKAYLAEHQLNSINADSEADDVIATLATKLTSINGEAIIVSTDKGFCQLSHPNIKRWDHFNQGYLTIEEMEKKLGVESTQFIDYLALAGDSGNKIPGVPGIGPKSAVELLKIFRSLANIYNSIDKVGSKQAKKLEEGKQMARLSYKLVQLQTDLPLNVNLKQFRIEQ</sequence>
<protein>
    <recommendedName>
        <fullName evidence="1">Flap endonuclease Xni</fullName>
        <shortName evidence="1">FEN</shortName>
        <ecNumber evidence="1">3.1.-.-</ecNumber>
    </recommendedName>
</protein>
<evidence type="ECO:0000255" key="1">
    <source>
        <dbReference type="HAMAP-Rule" id="MF_01192"/>
    </source>
</evidence>
<reference key="1">
    <citation type="submission" date="2008-01" db="EMBL/GenBank/DDBJ databases">
        <title>Complete sequence of Shewanella halifaxensis HAW-EB4.</title>
        <authorList>
            <consortium name="US DOE Joint Genome Institute"/>
            <person name="Copeland A."/>
            <person name="Lucas S."/>
            <person name="Lapidus A."/>
            <person name="Glavina del Rio T."/>
            <person name="Dalin E."/>
            <person name="Tice H."/>
            <person name="Bruce D."/>
            <person name="Goodwin L."/>
            <person name="Pitluck S."/>
            <person name="Sims D."/>
            <person name="Brettin T."/>
            <person name="Detter J.C."/>
            <person name="Han C."/>
            <person name="Kuske C.R."/>
            <person name="Schmutz J."/>
            <person name="Larimer F."/>
            <person name="Land M."/>
            <person name="Hauser L."/>
            <person name="Kyrpides N."/>
            <person name="Kim E."/>
            <person name="Zhao J.-S."/>
            <person name="Richardson P."/>
        </authorList>
    </citation>
    <scope>NUCLEOTIDE SEQUENCE [LARGE SCALE GENOMIC DNA]</scope>
    <source>
        <strain>HAW-EB4</strain>
    </source>
</reference>
<organism>
    <name type="scientific">Shewanella halifaxensis (strain HAW-EB4)</name>
    <dbReference type="NCBI Taxonomy" id="458817"/>
    <lineage>
        <taxon>Bacteria</taxon>
        <taxon>Pseudomonadati</taxon>
        <taxon>Pseudomonadota</taxon>
        <taxon>Gammaproteobacteria</taxon>
        <taxon>Alteromonadales</taxon>
        <taxon>Shewanellaceae</taxon>
        <taxon>Shewanella</taxon>
    </lineage>
</organism>
<comment type="function">
    <text evidence="1">Has flap endonuclease activity. During DNA replication, flap endonucleases cleave the 5'-overhanging flap structure that is generated by displacement synthesis when DNA polymerase encounters the 5'-end of a downstream Okazaki fragment.</text>
</comment>
<comment type="cofactor">
    <cofactor evidence="1">
        <name>Mg(2+)</name>
        <dbReference type="ChEBI" id="CHEBI:18420"/>
    </cofactor>
    <text evidence="1">Binds 2 Mg(2+) per subunit. Only one magnesium ion has a direct interaction with the protein, the other interactions are indirect.</text>
</comment>
<comment type="cofactor">
    <cofactor evidence="1">
        <name>K(+)</name>
        <dbReference type="ChEBI" id="CHEBI:29103"/>
    </cofactor>
    <text evidence="1">Binds 1 K(+) per subunit. The potassium ion strongly increases the affinity for DNA.</text>
</comment>
<comment type="similarity">
    <text evidence="1">Belongs to the Xni family.</text>
</comment>
<dbReference type="EC" id="3.1.-.-" evidence="1"/>
<dbReference type="EMBL" id="CP000931">
    <property type="protein sequence ID" value="ABZ77614.1"/>
    <property type="molecule type" value="Genomic_DNA"/>
</dbReference>
<dbReference type="RefSeq" id="WP_012278140.1">
    <property type="nucleotide sequence ID" value="NC_010334.1"/>
</dbReference>
<dbReference type="SMR" id="B0TPG7"/>
<dbReference type="STRING" id="458817.Shal_3066"/>
<dbReference type="KEGG" id="shl:Shal_3066"/>
<dbReference type="eggNOG" id="COG0258">
    <property type="taxonomic scope" value="Bacteria"/>
</dbReference>
<dbReference type="HOGENOM" id="CLU_004675_1_2_6"/>
<dbReference type="OrthoDB" id="8070997at2"/>
<dbReference type="Proteomes" id="UP000001317">
    <property type="component" value="Chromosome"/>
</dbReference>
<dbReference type="GO" id="GO:0008409">
    <property type="term" value="F:5'-3' exonuclease activity"/>
    <property type="evidence" value="ECO:0007669"/>
    <property type="project" value="InterPro"/>
</dbReference>
<dbReference type="GO" id="GO:0017108">
    <property type="term" value="F:5'-flap endonuclease activity"/>
    <property type="evidence" value="ECO:0007669"/>
    <property type="project" value="UniProtKB-UniRule"/>
</dbReference>
<dbReference type="GO" id="GO:0003677">
    <property type="term" value="F:DNA binding"/>
    <property type="evidence" value="ECO:0007669"/>
    <property type="project" value="UniProtKB-UniRule"/>
</dbReference>
<dbReference type="GO" id="GO:0000287">
    <property type="term" value="F:magnesium ion binding"/>
    <property type="evidence" value="ECO:0007669"/>
    <property type="project" value="UniProtKB-UniRule"/>
</dbReference>
<dbReference type="GO" id="GO:0030955">
    <property type="term" value="F:potassium ion binding"/>
    <property type="evidence" value="ECO:0007669"/>
    <property type="project" value="UniProtKB-UniRule"/>
</dbReference>
<dbReference type="GO" id="GO:0033567">
    <property type="term" value="P:DNA replication, Okazaki fragment processing"/>
    <property type="evidence" value="ECO:0007669"/>
    <property type="project" value="UniProtKB-UniRule"/>
</dbReference>
<dbReference type="CDD" id="cd09898">
    <property type="entry name" value="H3TH_53EXO"/>
    <property type="match status" value="1"/>
</dbReference>
<dbReference type="CDD" id="cd09859">
    <property type="entry name" value="PIN_53EXO"/>
    <property type="match status" value="1"/>
</dbReference>
<dbReference type="FunFam" id="1.10.150.20:FF:000003">
    <property type="entry name" value="DNA polymerase I"/>
    <property type="match status" value="1"/>
</dbReference>
<dbReference type="Gene3D" id="1.10.150.20">
    <property type="entry name" value="5' to 3' exonuclease, C-terminal subdomain"/>
    <property type="match status" value="1"/>
</dbReference>
<dbReference type="Gene3D" id="3.40.50.1010">
    <property type="entry name" value="5'-nuclease"/>
    <property type="match status" value="1"/>
</dbReference>
<dbReference type="HAMAP" id="MF_01192">
    <property type="entry name" value="Xni"/>
    <property type="match status" value="1"/>
</dbReference>
<dbReference type="InterPro" id="IPR020046">
    <property type="entry name" value="5-3_exonucl_a-hlix_arch_N"/>
</dbReference>
<dbReference type="InterPro" id="IPR002421">
    <property type="entry name" value="5-3_exonuclease"/>
</dbReference>
<dbReference type="InterPro" id="IPR036279">
    <property type="entry name" value="5-3_exonuclease_C_sf"/>
</dbReference>
<dbReference type="InterPro" id="IPR020045">
    <property type="entry name" value="DNA_polI_H3TH"/>
</dbReference>
<dbReference type="InterPro" id="IPR038969">
    <property type="entry name" value="FEN"/>
</dbReference>
<dbReference type="InterPro" id="IPR008918">
    <property type="entry name" value="HhH2"/>
</dbReference>
<dbReference type="InterPro" id="IPR029060">
    <property type="entry name" value="PIN-like_dom_sf"/>
</dbReference>
<dbReference type="InterPro" id="IPR022895">
    <property type="entry name" value="Xni"/>
</dbReference>
<dbReference type="NCBIfam" id="NF007017">
    <property type="entry name" value="PRK09482.1"/>
    <property type="match status" value="1"/>
</dbReference>
<dbReference type="PANTHER" id="PTHR42646:SF2">
    <property type="entry name" value="5'-3' EXONUCLEASE FAMILY PROTEIN"/>
    <property type="match status" value="1"/>
</dbReference>
<dbReference type="PANTHER" id="PTHR42646">
    <property type="entry name" value="FLAP ENDONUCLEASE XNI"/>
    <property type="match status" value="1"/>
</dbReference>
<dbReference type="Pfam" id="PF01367">
    <property type="entry name" value="5_3_exonuc"/>
    <property type="match status" value="1"/>
</dbReference>
<dbReference type="Pfam" id="PF02739">
    <property type="entry name" value="5_3_exonuc_N"/>
    <property type="match status" value="1"/>
</dbReference>
<dbReference type="SMART" id="SM00475">
    <property type="entry name" value="53EXOc"/>
    <property type="match status" value="1"/>
</dbReference>
<dbReference type="SMART" id="SM00279">
    <property type="entry name" value="HhH2"/>
    <property type="match status" value="1"/>
</dbReference>
<dbReference type="SUPFAM" id="SSF47807">
    <property type="entry name" value="5' to 3' exonuclease, C-terminal subdomain"/>
    <property type="match status" value="1"/>
</dbReference>
<dbReference type="SUPFAM" id="SSF88723">
    <property type="entry name" value="PIN domain-like"/>
    <property type="match status" value="1"/>
</dbReference>
<accession>B0TPG7</accession>
<feature type="chain" id="PRO_1000085477" description="Flap endonuclease Xni">
    <location>
        <begin position="1"/>
        <end position="252"/>
    </location>
</feature>
<feature type="domain" description="5'-3' exonuclease" evidence="1">
    <location>
        <begin position="161"/>
        <end position="251"/>
    </location>
</feature>
<feature type="region of interest" description="Interaction with DNA" evidence="1">
    <location>
        <begin position="185"/>
        <end position="190"/>
    </location>
</feature>
<feature type="binding site" evidence="1">
    <location>
        <position position="105"/>
    </location>
    <ligand>
        <name>Mg(2+)</name>
        <dbReference type="ChEBI" id="CHEBI:18420"/>
    </ligand>
</feature>
<feature type="binding site" evidence="1">
    <location>
        <position position="172"/>
    </location>
    <ligand>
        <name>K(+)</name>
        <dbReference type="ChEBI" id="CHEBI:29103"/>
    </ligand>
</feature>
<feature type="binding site" evidence="1">
    <location>
        <position position="173"/>
    </location>
    <ligand>
        <name>K(+)</name>
        <dbReference type="ChEBI" id="CHEBI:29103"/>
    </ligand>
</feature>
<feature type="binding site" evidence="1">
    <location>
        <position position="181"/>
    </location>
    <ligand>
        <name>K(+)</name>
        <dbReference type="ChEBI" id="CHEBI:29103"/>
    </ligand>
</feature>
<feature type="binding site" evidence="1">
    <location>
        <position position="183"/>
    </location>
    <ligand>
        <name>K(+)</name>
        <dbReference type="ChEBI" id="CHEBI:29103"/>
    </ligand>
</feature>
<feature type="binding site" evidence="1">
    <location>
        <position position="186"/>
    </location>
    <ligand>
        <name>K(+)</name>
        <dbReference type="ChEBI" id="CHEBI:29103"/>
    </ligand>
</feature>
<name>XNI_SHEHH</name>
<keyword id="KW-0238">DNA-binding</keyword>
<keyword id="KW-0255">Endonuclease</keyword>
<keyword id="KW-0378">Hydrolase</keyword>
<keyword id="KW-0460">Magnesium</keyword>
<keyword id="KW-0479">Metal-binding</keyword>
<keyword id="KW-0540">Nuclease</keyword>
<keyword id="KW-0630">Potassium</keyword>